<feature type="chain" id="PRO_1000085293" description="Chaperone protein DnaJ">
    <location>
        <begin position="1"/>
        <end position="376"/>
    </location>
</feature>
<feature type="domain" description="J" evidence="1">
    <location>
        <begin position="5"/>
        <end position="70"/>
    </location>
</feature>
<feature type="repeat" description="CXXCXGXG motif">
    <location>
        <begin position="145"/>
        <end position="152"/>
    </location>
</feature>
<feature type="repeat" description="CXXCXGXG motif">
    <location>
        <begin position="162"/>
        <end position="169"/>
    </location>
</feature>
<feature type="repeat" description="CXXCXGXG motif">
    <location>
        <begin position="184"/>
        <end position="191"/>
    </location>
</feature>
<feature type="repeat" description="CXXCXGXG motif">
    <location>
        <begin position="198"/>
        <end position="205"/>
    </location>
</feature>
<feature type="zinc finger region" description="CR-type" evidence="1">
    <location>
        <begin position="132"/>
        <end position="210"/>
    </location>
</feature>
<feature type="binding site" evidence="1">
    <location>
        <position position="145"/>
    </location>
    <ligand>
        <name>Zn(2+)</name>
        <dbReference type="ChEBI" id="CHEBI:29105"/>
        <label>1</label>
    </ligand>
</feature>
<feature type="binding site" evidence="1">
    <location>
        <position position="148"/>
    </location>
    <ligand>
        <name>Zn(2+)</name>
        <dbReference type="ChEBI" id="CHEBI:29105"/>
        <label>1</label>
    </ligand>
</feature>
<feature type="binding site" evidence="1">
    <location>
        <position position="162"/>
    </location>
    <ligand>
        <name>Zn(2+)</name>
        <dbReference type="ChEBI" id="CHEBI:29105"/>
        <label>2</label>
    </ligand>
</feature>
<feature type="binding site" evidence="1">
    <location>
        <position position="165"/>
    </location>
    <ligand>
        <name>Zn(2+)</name>
        <dbReference type="ChEBI" id="CHEBI:29105"/>
        <label>2</label>
    </ligand>
</feature>
<feature type="binding site" evidence="1">
    <location>
        <position position="184"/>
    </location>
    <ligand>
        <name>Zn(2+)</name>
        <dbReference type="ChEBI" id="CHEBI:29105"/>
        <label>2</label>
    </ligand>
</feature>
<feature type="binding site" evidence="1">
    <location>
        <position position="187"/>
    </location>
    <ligand>
        <name>Zn(2+)</name>
        <dbReference type="ChEBI" id="CHEBI:29105"/>
        <label>2</label>
    </ligand>
</feature>
<feature type="binding site" evidence="1">
    <location>
        <position position="198"/>
    </location>
    <ligand>
        <name>Zn(2+)</name>
        <dbReference type="ChEBI" id="CHEBI:29105"/>
        <label>1</label>
    </ligand>
</feature>
<feature type="binding site" evidence="1">
    <location>
        <position position="201"/>
    </location>
    <ligand>
        <name>Zn(2+)</name>
        <dbReference type="ChEBI" id="CHEBI:29105"/>
        <label>1</label>
    </ligand>
</feature>
<sequence>MSKRDYYEVLGVGRDASEREIKKAYKRLAMKFHPDRNPGDKAAEASFKEVKEAYEILTDSDKKAAYDQFGHAGVDPNRGGGGFGGGADFGDVFGDVFGDIFGGGRRGGQRQAARGSDLRYNLELSLEEAVRGLTKELRIPTLATCDLCDGSGAKKGSSPTTCGTCHGQGQVQMRQGFFAVQQACPTCHGRGKIIKDPCGKCHGEGRVEKSKTLSVKIPAGVDTGDRIRLSGEGEAGEFGAPPGDLYVQVTVREHAIFVRDGNNLYCEVPISFSTAALGGEIEVPTLDGKVNLKIPSETQTGRMFRLRGKGVKSVRSHAVGDLLCKVVMETPVNLNDKQKELLREFDNTLTGSSKKHSPKAEGFFDGVKKFFQDLNS</sequence>
<proteinExistence type="inferred from homology"/>
<name>DNAJ_SHELP</name>
<comment type="function">
    <text evidence="1">Participates actively in the response to hyperosmotic and heat shock by preventing the aggregation of stress-denatured proteins and by disaggregating proteins, also in an autonomous, DnaK-independent fashion. Unfolded proteins bind initially to DnaJ; upon interaction with the DnaJ-bound protein, DnaK hydrolyzes its bound ATP, resulting in the formation of a stable complex. GrpE releases ADP from DnaK; ATP binding to DnaK triggers the release of the substrate protein, thus completing the reaction cycle. Several rounds of ATP-dependent interactions between DnaJ, DnaK and GrpE are required for fully efficient folding. Also involved, together with DnaK and GrpE, in the DNA replication of plasmids through activation of initiation proteins.</text>
</comment>
<comment type="cofactor">
    <cofactor evidence="1">
        <name>Zn(2+)</name>
        <dbReference type="ChEBI" id="CHEBI:29105"/>
    </cofactor>
    <text evidence="1">Binds 2 Zn(2+) ions per monomer.</text>
</comment>
<comment type="subunit">
    <text evidence="1">Homodimer.</text>
</comment>
<comment type="subcellular location">
    <subcellularLocation>
        <location evidence="1">Cytoplasm</location>
    </subcellularLocation>
</comment>
<comment type="domain">
    <text evidence="1">The J domain is necessary and sufficient to stimulate DnaK ATPase activity. Zinc center 1 plays an important role in the autonomous, DnaK-independent chaperone activity of DnaJ. Zinc center 2 is essential for interaction with DnaK and for DnaJ activity.</text>
</comment>
<comment type="similarity">
    <text evidence="1">Belongs to the DnaJ family.</text>
</comment>
<protein>
    <recommendedName>
        <fullName evidence="1">Chaperone protein DnaJ</fullName>
    </recommendedName>
</protein>
<keyword id="KW-0143">Chaperone</keyword>
<keyword id="KW-0963">Cytoplasm</keyword>
<keyword id="KW-0235">DNA replication</keyword>
<keyword id="KW-0479">Metal-binding</keyword>
<keyword id="KW-1185">Reference proteome</keyword>
<keyword id="KW-0677">Repeat</keyword>
<keyword id="KW-0346">Stress response</keyword>
<keyword id="KW-0862">Zinc</keyword>
<keyword id="KW-0863">Zinc-finger</keyword>
<accession>A3QGW1</accession>
<organism>
    <name type="scientific">Shewanella loihica (strain ATCC BAA-1088 / PV-4)</name>
    <dbReference type="NCBI Taxonomy" id="323850"/>
    <lineage>
        <taxon>Bacteria</taxon>
        <taxon>Pseudomonadati</taxon>
        <taxon>Pseudomonadota</taxon>
        <taxon>Gammaproteobacteria</taxon>
        <taxon>Alteromonadales</taxon>
        <taxon>Shewanellaceae</taxon>
        <taxon>Shewanella</taxon>
    </lineage>
</organism>
<evidence type="ECO:0000255" key="1">
    <source>
        <dbReference type="HAMAP-Rule" id="MF_01152"/>
    </source>
</evidence>
<gene>
    <name evidence="1" type="primary">dnaJ</name>
    <name type="ordered locus">Shew_2843</name>
</gene>
<dbReference type="EMBL" id="CP000606">
    <property type="protein sequence ID" value="ABO24709.1"/>
    <property type="molecule type" value="Genomic_DNA"/>
</dbReference>
<dbReference type="RefSeq" id="WP_011866640.1">
    <property type="nucleotide sequence ID" value="NC_009092.1"/>
</dbReference>
<dbReference type="SMR" id="A3QGW1"/>
<dbReference type="STRING" id="323850.Shew_2843"/>
<dbReference type="KEGG" id="slo:Shew_2843"/>
<dbReference type="eggNOG" id="COG0484">
    <property type="taxonomic scope" value="Bacteria"/>
</dbReference>
<dbReference type="HOGENOM" id="CLU_017633_0_7_6"/>
<dbReference type="OrthoDB" id="9779889at2"/>
<dbReference type="Proteomes" id="UP000001558">
    <property type="component" value="Chromosome"/>
</dbReference>
<dbReference type="GO" id="GO:0005737">
    <property type="term" value="C:cytoplasm"/>
    <property type="evidence" value="ECO:0007669"/>
    <property type="project" value="UniProtKB-SubCell"/>
</dbReference>
<dbReference type="GO" id="GO:0005524">
    <property type="term" value="F:ATP binding"/>
    <property type="evidence" value="ECO:0007669"/>
    <property type="project" value="InterPro"/>
</dbReference>
<dbReference type="GO" id="GO:0031072">
    <property type="term" value="F:heat shock protein binding"/>
    <property type="evidence" value="ECO:0007669"/>
    <property type="project" value="InterPro"/>
</dbReference>
<dbReference type="GO" id="GO:0051082">
    <property type="term" value="F:unfolded protein binding"/>
    <property type="evidence" value="ECO:0007669"/>
    <property type="project" value="UniProtKB-UniRule"/>
</dbReference>
<dbReference type="GO" id="GO:0008270">
    <property type="term" value="F:zinc ion binding"/>
    <property type="evidence" value="ECO:0007669"/>
    <property type="project" value="UniProtKB-UniRule"/>
</dbReference>
<dbReference type="GO" id="GO:0051085">
    <property type="term" value="P:chaperone cofactor-dependent protein refolding"/>
    <property type="evidence" value="ECO:0007669"/>
    <property type="project" value="TreeGrafter"/>
</dbReference>
<dbReference type="GO" id="GO:0006260">
    <property type="term" value="P:DNA replication"/>
    <property type="evidence" value="ECO:0007669"/>
    <property type="project" value="UniProtKB-KW"/>
</dbReference>
<dbReference type="GO" id="GO:0042026">
    <property type="term" value="P:protein refolding"/>
    <property type="evidence" value="ECO:0007669"/>
    <property type="project" value="TreeGrafter"/>
</dbReference>
<dbReference type="GO" id="GO:0009408">
    <property type="term" value="P:response to heat"/>
    <property type="evidence" value="ECO:0007669"/>
    <property type="project" value="InterPro"/>
</dbReference>
<dbReference type="CDD" id="cd06257">
    <property type="entry name" value="DnaJ"/>
    <property type="match status" value="1"/>
</dbReference>
<dbReference type="CDD" id="cd10747">
    <property type="entry name" value="DnaJ_C"/>
    <property type="match status" value="1"/>
</dbReference>
<dbReference type="CDD" id="cd10719">
    <property type="entry name" value="DnaJ_zf"/>
    <property type="match status" value="1"/>
</dbReference>
<dbReference type="FunFam" id="1.10.287.110:FF:000003">
    <property type="entry name" value="Molecular chaperone DnaJ"/>
    <property type="match status" value="1"/>
</dbReference>
<dbReference type="FunFam" id="2.10.230.10:FF:000002">
    <property type="entry name" value="Molecular chaperone DnaJ"/>
    <property type="match status" value="1"/>
</dbReference>
<dbReference type="FunFam" id="2.60.260.20:FF:000004">
    <property type="entry name" value="Molecular chaperone DnaJ"/>
    <property type="match status" value="1"/>
</dbReference>
<dbReference type="Gene3D" id="1.10.287.110">
    <property type="entry name" value="DnaJ domain"/>
    <property type="match status" value="1"/>
</dbReference>
<dbReference type="Gene3D" id="2.10.230.10">
    <property type="entry name" value="Heat shock protein DnaJ, cysteine-rich domain"/>
    <property type="match status" value="1"/>
</dbReference>
<dbReference type="Gene3D" id="2.60.260.20">
    <property type="entry name" value="Urease metallochaperone UreE, N-terminal domain"/>
    <property type="match status" value="2"/>
</dbReference>
<dbReference type="HAMAP" id="MF_01152">
    <property type="entry name" value="DnaJ"/>
    <property type="match status" value="1"/>
</dbReference>
<dbReference type="InterPro" id="IPR012724">
    <property type="entry name" value="DnaJ"/>
</dbReference>
<dbReference type="InterPro" id="IPR002939">
    <property type="entry name" value="DnaJ_C"/>
</dbReference>
<dbReference type="InterPro" id="IPR001623">
    <property type="entry name" value="DnaJ_domain"/>
</dbReference>
<dbReference type="InterPro" id="IPR018253">
    <property type="entry name" value="DnaJ_domain_CS"/>
</dbReference>
<dbReference type="InterPro" id="IPR008971">
    <property type="entry name" value="HSP40/DnaJ_pept-bd"/>
</dbReference>
<dbReference type="InterPro" id="IPR001305">
    <property type="entry name" value="HSP_DnaJ_Cys-rich_dom"/>
</dbReference>
<dbReference type="InterPro" id="IPR036410">
    <property type="entry name" value="HSP_DnaJ_Cys-rich_dom_sf"/>
</dbReference>
<dbReference type="InterPro" id="IPR036869">
    <property type="entry name" value="J_dom_sf"/>
</dbReference>
<dbReference type="NCBIfam" id="TIGR02349">
    <property type="entry name" value="DnaJ_bact"/>
    <property type="match status" value="1"/>
</dbReference>
<dbReference type="NCBIfam" id="NF008035">
    <property type="entry name" value="PRK10767.1"/>
    <property type="match status" value="1"/>
</dbReference>
<dbReference type="PANTHER" id="PTHR43096:SF48">
    <property type="entry name" value="CHAPERONE PROTEIN DNAJ"/>
    <property type="match status" value="1"/>
</dbReference>
<dbReference type="PANTHER" id="PTHR43096">
    <property type="entry name" value="DNAJ HOMOLOG 1, MITOCHONDRIAL-RELATED"/>
    <property type="match status" value="1"/>
</dbReference>
<dbReference type="Pfam" id="PF00226">
    <property type="entry name" value="DnaJ"/>
    <property type="match status" value="1"/>
</dbReference>
<dbReference type="Pfam" id="PF01556">
    <property type="entry name" value="DnaJ_C"/>
    <property type="match status" value="1"/>
</dbReference>
<dbReference type="Pfam" id="PF00684">
    <property type="entry name" value="DnaJ_CXXCXGXG"/>
    <property type="match status" value="1"/>
</dbReference>
<dbReference type="PRINTS" id="PR00625">
    <property type="entry name" value="JDOMAIN"/>
</dbReference>
<dbReference type="SMART" id="SM00271">
    <property type="entry name" value="DnaJ"/>
    <property type="match status" value="1"/>
</dbReference>
<dbReference type="SUPFAM" id="SSF46565">
    <property type="entry name" value="Chaperone J-domain"/>
    <property type="match status" value="1"/>
</dbReference>
<dbReference type="SUPFAM" id="SSF57938">
    <property type="entry name" value="DnaJ/Hsp40 cysteine-rich domain"/>
    <property type="match status" value="1"/>
</dbReference>
<dbReference type="SUPFAM" id="SSF49493">
    <property type="entry name" value="HSP40/DnaJ peptide-binding domain"/>
    <property type="match status" value="2"/>
</dbReference>
<dbReference type="PROSITE" id="PS00636">
    <property type="entry name" value="DNAJ_1"/>
    <property type="match status" value="1"/>
</dbReference>
<dbReference type="PROSITE" id="PS50076">
    <property type="entry name" value="DNAJ_2"/>
    <property type="match status" value="1"/>
</dbReference>
<dbReference type="PROSITE" id="PS51188">
    <property type="entry name" value="ZF_CR"/>
    <property type="match status" value="1"/>
</dbReference>
<reference key="1">
    <citation type="submission" date="2007-03" db="EMBL/GenBank/DDBJ databases">
        <title>Complete sequence of Shewanella loihica PV-4.</title>
        <authorList>
            <consortium name="US DOE Joint Genome Institute"/>
            <person name="Copeland A."/>
            <person name="Lucas S."/>
            <person name="Lapidus A."/>
            <person name="Barry K."/>
            <person name="Detter J.C."/>
            <person name="Glavina del Rio T."/>
            <person name="Hammon N."/>
            <person name="Israni S."/>
            <person name="Dalin E."/>
            <person name="Tice H."/>
            <person name="Pitluck S."/>
            <person name="Chain P."/>
            <person name="Malfatti S."/>
            <person name="Shin M."/>
            <person name="Vergez L."/>
            <person name="Schmutz J."/>
            <person name="Larimer F."/>
            <person name="Land M."/>
            <person name="Hauser L."/>
            <person name="Kyrpides N."/>
            <person name="Mikhailova N."/>
            <person name="Romine M.F."/>
            <person name="Serres G."/>
            <person name="Fredrickson J."/>
            <person name="Tiedje J."/>
            <person name="Richardson P."/>
        </authorList>
    </citation>
    <scope>NUCLEOTIDE SEQUENCE [LARGE SCALE GENOMIC DNA]</scope>
    <source>
        <strain>ATCC BAA-1088 / PV-4</strain>
    </source>
</reference>